<dbReference type="EMBL" id="CP001638">
    <property type="protein sequence ID" value="ACS23059.1"/>
    <property type="molecule type" value="Genomic_DNA"/>
</dbReference>
<dbReference type="SMR" id="C5D3S5"/>
<dbReference type="STRING" id="471223.GWCH70_0119"/>
<dbReference type="KEGG" id="gwc:GWCH70_0119"/>
<dbReference type="eggNOG" id="COG0255">
    <property type="taxonomic scope" value="Bacteria"/>
</dbReference>
<dbReference type="HOGENOM" id="CLU_158491_5_2_9"/>
<dbReference type="OrthoDB" id="9815192at2"/>
<dbReference type="GO" id="GO:0022625">
    <property type="term" value="C:cytosolic large ribosomal subunit"/>
    <property type="evidence" value="ECO:0007669"/>
    <property type="project" value="TreeGrafter"/>
</dbReference>
<dbReference type="GO" id="GO:0003735">
    <property type="term" value="F:structural constituent of ribosome"/>
    <property type="evidence" value="ECO:0007669"/>
    <property type="project" value="InterPro"/>
</dbReference>
<dbReference type="GO" id="GO:0006412">
    <property type="term" value="P:translation"/>
    <property type="evidence" value="ECO:0007669"/>
    <property type="project" value="UniProtKB-UniRule"/>
</dbReference>
<dbReference type="CDD" id="cd00427">
    <property type="entry name" value="Ribosomal_L29_HIP"/>
    <property type="match status" value="1"/>
</dbReference>
<dbReference type="FunFam" id="1.10.287.310:FF:000001">
    <property type="entry name" value="50S ribosomal protein L29"/>
    <property type="match status" value="1"/>
</dbReference>
<dbReference type="Gene3D" id="1.10.287.310">
    <property type="match status" value="1"/>
</dbReference>
<dbReference type="HAMAP" id="MF_00374">
    <property type="entry name" value="Ribosomal_uL29"/>
    <property type="match status" value="1"/>
</dbReference>
<dbReference type="InterPro" id="IPR050063">
    <property type="entry name" value="Ribosomal_protein_uL29"/>
</dbReference>
<dbReference type="InterPro" id="IPR001854">
    <property type="entry name" value="Ribosomal_uL29"/>
</dbReference>
<dbReference type="InterPro" id="IPR018254">
    <property type="entry name" value="Ribosomal_uL29_CS"/>
</dbReference>
<dbReference type="InterPro" id="IPR036049">
    <property type="entry name" value="Ribosomal_uL29_sf"/>
</dbReference>
<dbReference type="NCBIfam" id="TIGR00012">
    <property type="entry name" value="L29"/>
    <property type="match status" value="1"/>
</dbReference>
<dbReference type="PANTHER" id="PTHR10916">
    <property type="entry name" value="60S RIBOSOMAL PROTEIN L35/50S RIBOSOMAL PROTEIN L29"/>
    <property type="match status" value="1"/>
</dbReference>
<dbReference type="PANTHER" id="PTHR10916:SF0">
    <property type="entry name" value="LARGE RIBOSOMAL SUBUNIT PROTEIN UL29C"/>
    <property type="match status" value="1"/>
</dbReference>
<dbReference type="Pfam" id="PF00831">
    <property type="entry name" value="Ribosomal_L29"/>
    <property type="match status" value="1"/>
</dbReference>
<dbReference type="SUPFAM" id="SSF46561">
    <property type="entry name" value="Ribosomal protein L29 (L29p)"/>
    <property type="match status" value="1"/>
</dbReference>
<dbReference type="PROSITE" id="PS00579">
    <property type="entry name" value="RIBOSOMAL_L29"/>
    <property type="match status" value="1"/>
</dbReference>
<proteinExistence type="inferred from homology"/>
<evidence type="ECO:0000255" key="1">
    <source>
        <dbReference type="HAMAP-Rule" id="MF_00374"/>
    </source>
</evidence>
<evidence type="ECO:0000305" key="2"/>
<protein>
    <recommendedName>
        <fullName evidence="1">Large ribosomal subunit protein uL29</fullName>
    </recommendedName>
    <alternativeName>
        <fullName evidence="2">50S ribosomal protein L29</fullName>
    </alternativeName>
</protein>
<gene>
    <name evidence="1" type="primary">rpmC</name>
    <name type="ordered locus">GWCH70_0119</name>
</gene>
<accession>C5D3S5</accession>
<feature type="chain" id="PRO_1000205629" description="Large ribosomal subunit protein uL29">
    <location>
        <begin position="1"/>
        <end position="68"/>
    </location>
</feature>
<comment type="similarity">
    <text evidence="1">Belongs to the universal ribosomal protein uL29 family.</text>
</comment>
<keyword id="KW-0687">Ribonucleoprotein</keyword>
<keyword id="KW-0689">Ribosomal protein</keyword>
<sequence length="68" mass="7995">MKAKEIRELTTAEIEQKIKALKEELFNLRFQLATGQLENTARIRQVRKDIARMKTIIREREIAANAKK</sequence>
<reference key="1">
    <citation type="submission" date="2009-06" db="EMBL/GenBank/DDBJ databases">
        <title>Complete sequence of chromosome of Geopacillus sp. WCH70.</title>
        <authorList>
            <consortium name="US DOE Joint Genome Institute"/>
            <person name="Lucas S."/>
            <person name="Copeland A."/>
            <person name="Lapidus A."/>
            <person name="Glavina del Rio T."/>
            <person name="Dalin E."/>
            <person name="Tice H."/>
            <person name="Bruce D."/>
            <person name="Goodwin L."/>
            <person name="Pitluck S."/>
            <person name="Chertkov O."/>
            <person name="Brettin T."/>
            <person name="Detter J.C."/>
            <person name="Han C."/>
            <person name="Larimer F."/>
            <person name="Land M."/>
            <person name="Hauser L."/>
            <person name="Kyrpides N."/>
            <person name="Mikhailova N."/>
            <person name="Brumm P."/>
            <person name="Mead D.A."/>
            <person name="Richardson P."/>
        </authorList>
    </citation>
    <scope>NUCLEOTIDE SEQUENCE [LARGE SCALE GENOMIC DNA]</scope>
    <source>
        <strain>WCH70</strain>
    </source>
</reference>
<organism>
    <name type="scientific">Geobacillus sp. (strain WCH70)</name>
    <dbReference type="NCBI Taxonomy" id="471223"/>
    <lineage>
        <taxon>Bacteria</taxon>
        <taxon>Bacillati</taxon>
        <taxon>Bacillota</taxon>
        <taxon>Bacilli</taxon>
        <taxon>Bacillales</taxon>
        <taxon>Anoxybacillaceae</taxon>
        <taxon>Geobacillus</taxon>
    </lineage>
</organism>
<name>RL29_GEOSW</name>